<accession>P36530</accession>
<dbReference type="PIR" id="S17274">
    <property type="entry name" value="S17274"/>
</dbReference>
<dbReference type="GO" id="GO:0005739">
    <property type="term" value="C:mitochondrion"/>
    <property type="evidence" value="ECO:0007669"/>
    <property type="project" value="UniProtKB-SubCell"/>
</dbReference>
<dbReference type="GO" id="GO:1990904">
    <property type="term" value="C:ribonucleoprotein complex"/>
    <property type="evidence" value="ECO:0007669"/>
    <property type="project" value="UniProtKB-KW"/>
</dbReference>
<dbReference type="GO" id="GO:0005840">
    <property type="term" value="C:ribosome"/>
    <property type="evidence" value="ECO:0007669"/>
    <property type="project" value="UniProtKB-KW"/>
</dbReference>
<reference key="1">
    <citation type="journal article" date="1991" name="FEBS Lett.">
        <title>Extended N-terminal sequencing of proteins of the large ribosomal subunit from yeast mitochondria.</title>
        <authorList>
            <person name="Grohmann L."/>
            <person name="Graack H.-R."/>
            <person name="Kruft V."/>
            <person name="Choli T."/>
            <person name="Goldschmidt-Reisin S."/>
            <person name="Kitakawa M."/>
        </authorList>
    </citation>
    <scope>PROTEIN SEQUENCE</scope>
    <scope>SUBCELLULAR LOCATION</scope>
    <source>
        <strain>07173</strain>
    </source>
</reference>
<evidence type="ECO:0000269" key="1">
    <source>
    </source>
</evidence>
<evidence type="ECO:0000303" key="2">
    <source>
    </source>
</evidence>
<keyword id="KW-0903">Direct protein sequencing</keyword>
<keyword id="KW-0496">Mitochondrion</keyword>
<keyword id="KW-0687">Ribonucleoprotein</keyword>
<keyword id="KW-0689">Ribosomal protein</keyword>
<comment type="function">
    <text>Putative component of the large subunit of mitochondrial ribosome.</text>
</comment>
<comment type="subcellular location">
    <subcellularLocation>
        <location evidence="1">Mitochondrion</location>
    </subcellularLocation>
</comment>
<organism>
    <name type="scientific">Saccharomyces cerevisiae</name>
    <name type="common">Baker's yeast</name>
    <dbReference type="NCBI Taxonomy" id="4932"/>
    <lineage>
        <taxon>Eukaryota</taxon>
        <taxon>Fungi</taxon>
        <taxon>Dikarya</taxon>
        <taxon>Ascomycota</taxon>
        <taxon>Saccharomycotina</taxon>
        <taxon>Saccharomycetes</taxon>
        <taxon>Saccharomycetales</taxon>
        <taxon>Saccharomycetaceae</taxon>
        <taxon>Saccharomyces</taxon>
    </lineage>
</organism>
<name>YX35_YEASX</name>
<proteinExistence type="evidence at protein level"/>
<sequence>GNATSERLPTDPVYPXV</sequence>
<protein>
    <recommendedName>
        <fullName evidence="2">Putative large ribosomal subunit protein YmL35</fullName>
    </recommendedName>
    <alternativeName>
        <fullName>54S ribosomal protein L35, mitochondrial</fullName>
    </alternativeName>
</protein>
<feature type="chain" id="PRO_0000087692" description="Putative large ribosomal subunit protein YmL35">
    <location>
        <begin position="1"/>
        <end position="17" status="greater than"/>
    </location>
</feature>
<feature type="non-terminal residue">
    <location>
        <position position="17"/>
    </location>
</feature>